<dbReference type="EMBL" id="AE005674">
    <property type="protein sequence ID" value="AAN41842.1"/>
    <property type="status" value="ALT_INIT"/>
    <property type="molecule type" value="Genomic_DNA"/>
</dbReference>
<dbReference type="EMBL" id="AE014073">
    <property type="status" value="NOT_ANNOTATED_CDS"/>
    <property type="molecule type" value="Genomic_DNA"/>
</dbReference>
<dbReference type="RefSeq" id="NP_706135.1">
    <property type="nucleotide sequence ID" value="NC_004337.2"/>
</dbReference>
<dbReference type="RefSeq" id="WP_000417058.1">
    <property type="nucleotide sequence ID" value="NZ_WPGW01000006.1"/>
</dbReference>
<dbReference type="PDB" id="5H1N">
    <property type="method" value="X-ray"/>
    <property type="resolution" value="1.47 A"/>
    <property type="chains" value="A/B=1-66"/>
</dbReference>
<dbReference type="PDBsum" id="5H1N"/>
<dbReference type="SMR" id="P0A8K7"/>
<dbReference type="STRING" id="198214.SF0180"/>
<dbReference type="PaxDb" id="198214-SF0180"/>
<dbReference type="GeneID" id="1024470"/>
<dbReference type="KEGG" id="sfl:SF0180"/>
<dbReference type="PATRIC" id="fig|198214.7.peg.202"/>
<dbReference type="HOGENOM" id="CLU_190008_0_0_6"/>
<dbReference type="Proteomes" id="UP000001006">
    <property type="component" value="Chromosome"/>
</dbReference>
<dbReference type="Proteomes" id="UP000002673">
    <property type="component" value="Chromosome"/>
</dbReference>
<dbReference type="HAMAP" id="MF_01064">
    <property type="entry name" value="UPF0253"/>
    <property type="match status" value="1"/>
</dbReference>
<dbReference type="InterPro" id="IPR009624">
    <property type="entry name" value="UPF0253"/>
</dbReference>
<dbReference type="NCBIfam" id="NF003436">
    <property type="entry name" value="PRK04964.1"/>
    <property type="match status" value="1"/>
</dbReference>
<dbReference type="Pfam" id="PF06786">
    <property type="entry name" value="UPF0253"/>
    <property type="match status" value="1"/>
</dbReference>
<comment type="similarity">
    <text evidence="1">Belongs to the UPF0253 family.</text>
</comment>
<comment type="sequence caution" evidence="1">
    <conflict type="erroneous initiation">
        <sequence resource="EMBL-CDS" id="AAN41842"/>
    </conflict>
</comment>
<proteinExistence type="evidence at protein level"/>
<accession>P0A8K7</accession>
<accession>P52099</accession>
<name>YAEP_SHIFL</name>
<sequence length="66" mass="7214">MEKYCELIRKRYAEIASGDLGYVPDALGCVLKVLNEMAADDALSEAVREKAAYAAANLLVSDYVNE</sequence>
<protein>
    <recommendedName>
        <fullName>UPF0253 protein YaeP</fullName>
    </recommendedName>
</protein>
<reference key="1">
    <citation type="journal article" date="2002" name="Nucleic Acids Res.">
        <title>Genome sequence of Shigella flexneri 2a: insights into pathogenicity through comparison with genomes of Escherichia coli K12 and O157.</title>
        <authorList>
            <person name="Jin Q."/>
            <person name="Yuan Z."/>
            <person name="Xu J."/>
            <person name="Wang Y."/>
            <person name="Shen Y."/>
            <person name="Lu W."/>
            <person name="Wang J."/>
            <person name="Liu H."/>
            <person name="Yang J."/>
            <person name="Yang F."/>
            <person name="Zhang X."/>
            <person name="Zhang J."/>
            <person name="Yang G."/>
            <person name="Wu H."/>
            <person name="Qu D."/>
            <person name="Dong J."/>
            <person name="Sun L."/>
            <person name="Xue Y."/>
            <person name="Zhao A."/>
            <person name="Gao Y."/>
            <person name="Zhu J."/>
            <person name="Kan B."/>
            <person name="Ding K."/>
            <person name="Chen S."/>
            <person name="Cheng H."/>
            <person name="Yao Z."/>
            <person name="He B."/>
            <person name="Chen R."/>
            <person name="Ma D."/>
            <person name="Qiang B."/>
            <person name="Wen Y."/>
            <person name="Hou Y."/>
            <person name="Yu J."/>
        </authorList>
    </citation>
    <scope>NUCLEOTIDE SEQUENCE [LARGE SCALE GENOMIC DNA]</scope>
    <source>
        <strain>301 / Serotype 2a</strain>
    </source>
</reference>
<reference key="2">
    <citation type="journal article" date="2003" name="Infect. Immun.">
        <title>Complete genome sequence and comparative genomics of Shigella flexneri serotype 2a strain 2457T.</title>
        <authorList>
            <person name="Wei J."/>
            <person name="Goldberg M.B."/>
            <person name="Burland V."/>
            <person name="Venkatesan M.M."/>
            <person name="Deng W."/>
            <person name="Fournier G."/>
            <person name="Mayhew G.F."/>
            <person name="Plunkett G. III"/>
            <person name="Rose D.J."/>
            <person name="Darling A."/>
            <person name="Mau B."/>
            <person name="Perna N.T."/>
            <person name="Payne S.M."/>
            <person name="Runyen-Janecky L.J."/>
            <person name="Zhou S."/>
            <person name="Schwartz D.C."/>
            <person name="Blattner F.R."/>
        </authorList>
    </citation>
    <scope>NUCLEOTIDE SEQUENCE [LARGE SCALE GENOMIC DNA]</scope>
    <source>
        <strain>ATCC 700930 / 2457T / Serotype 2a</strain>
    </source>
</reference>
<keyword id="KW-0002">3D-structure</keyword>
<keyword id="KW-1185">Reference proteome</keyword>
<evidence type="ECO:0000305" key="1"/>
<evidence type="ECO:0007829" key="2">
    <source>
        <dbReference type="PDB" id="5H1N"/>
    </source>
</evidence>
<gene>
    <name type="primary">yaeP</name>
    <name type="ordered locus">SF0180</name>
    <name type="ordered locus">S0182.1</name>
</gene>
<feature type="chain" id="PRO_0000215545" description="UPF0253 protein YaeP">
    <location>
        <begin position="1"/>
        <end position="66"/>
    </location>
</feature>
<feature type="helix" evidence="2">
    <location>
        <begin position="6"/>
        <end position="16"/>
    </location>
</feature>
<feature type="helix" evidence="2">
    <location>
        <begin position="26"/>
        <end position="38"/>
    </location>
</feature>
<feature type="helix" evidence="2">
    <location>
        <begin position="45"/>
        <end position="60"/>
    </location>
</feature>
<organism>
    <name type="scientific">Shigella flexneri</name>
    <dbReference type="NCBI Taxonomy" id="623"/>
    <lineage>
        <taxon>Bacteria</taxon>
        <taxon>Pseudomonadati</taxon>
        <taxon>Pseudomonadota</taxon>
        <taxon>Gammaproteobacteria</taxon>
        <taxon>Enterobacterales</taxon>
        <taxon>Enterobacteriaceae</taxon>
        <taxon>Shigella</taxon>
    </lineage>
</organism>